<name>FIP1_NEUCR</name>
<protein>
    <recommendedName>
        <fullName>Pre-mRNA polyadenylation factor fip-1</fullName>
    </recommendedName>
</protein>
<accession>Q7SAX8</accession>
<proteinExistence type="inferred from homology"/>
<organism>
    <name type="scientific">Neurospora crassa (strain ATCC 24698 / 74-OR23-1A / CBS 708.71 / DSM 1257 / FGSC 987)</name>
    <dbReference type="NCBI Taxonomy" id="367110"/>
    <lineage>
        <taxon>Eukaryota</taxon>
        <taxon>Fungi</taxon>
        <taxon>Dikarya</taxon>
        <taxon>Ascomycota</taxon>
        <taxon>Pezizomycotina</taxon>
        <taxon>Sordariomycetes</taxon>
        <taxon>Sordariomycetidae</taxon>
        <taxon>Sordariales</taxon>
        <taxon>Sordariaceae</taxon>
        <taxon>Neurospora</taxon>
    </lineage>
</organism>
<dbReference type="EMBL" id="CM002239">
    <property type="protein sequence ID" value="EAA33545.1"/>
    <property type="molecule type" value="Genomic_DNA"/>
</dbReference>
<dbReference type="RefSeq" id="XP_962781.1">
    <property type="nucleotide sequence ID" value="XM_957688.2"/>
</dbReference>
<dbReference type="SMR" id="Q7SAX8"/>
<dbReference type="STRING" id="367110.Q7SAX8"/>
<dbReference type="PaxDb" id="5141-EFNCRP00000007700"/>
<dbReference type="EnsemblFungi" id="EAA33545">
    <property type="protein sequence ID" value="EAA33545"/>
    <property type="gene ID" value="NCU07654"/>
</dbReference>
<dbReference type="GeneID" id="3878929"/>
<dbReference type="KEGG" id="ncr:NCU07654"/>
<dbReference type="VEuPathDB" id="FungiDB:NCU07654"/>
<dbReference type="HOGENOM" id="CLU_039307_1_0_1"/>
<dbReference type="InParanoid" id="Q7SAX8"/>
<dbReference type="OMA" id="FDEFTWE"/>
<dbReference type="OrthoDB" id="1917198at2759"/>
<dbReference type="Proteomes" id="UP000001805">
    <property type="component" value="Chromosome 4, Linkage Group IV"/>
</dbReference>
<dbReference type="GO" id="GO:0005847">
    <property type="term" value="C:mRNA cleavage and polyadenylation specificity factor complex"/>
    <property type="evidence" value="ECO:0000318"/>
    <property type="project" value="GO_Central"/>
</dbReference>
<dbReference type="GO" id="GO:0006397">
    <property type="term" value="P:mRNA processing"/>
    <property type="evidence" value="ECO:0007669"/>
    <property type="project" value="UniProtKB-KW"/>
</dbReference>
<dbReference type="InterPro" id="IPR007854">
    <property type="entry name" value="Fip1_dom"/>
</dbReference>
<dbReference type="InterPro" id="IPR051187">
    <property type="entry name" value="Pre-mRNA_3'-end_processing_reg"/>
</dbReference>
<dbReference type="PANTHER" id="PTHR13484">
    <property type="entry name" value="FIP1-LIKE 1 PROTEIN"/>
    <property type="match status" value="1"/>
</dbReference>
<dbReference type="PANTHER" id="PTHR13484:SF0">
    <property type="entry name" value="PRE-MRNA 3'-END-PROCESSING FACTOR FIP1"/>
    <property type="match status" value="1"/>
</dbReference>
<dbReference type="Pfam" id="PF05182">
    <property type="entry name" value="Fip1"/>
    <property type="match status" value="1"/>
</dbReference>
<evidence type="ECO:0000250" key="1"/>
<evidence type="ECO:0000256" key="2">
    <source>
        <dbReference type="SAM" id="MobiDB-lite"/>
    </source>
</evidence>
<evidence type="ECO:0000305" key="3"/>
<keyword id="KW-0507">mRNA processing</keyword>
<keyword id="KW-0539">Nucleus</keyword>
<keyword id="KW-1185">Reference proteome</keyword>
<reference key="1">
    <citation type="journal article" date="2003" name="Nature">
        <title>The genome sequence of the filamentous fungus Neurospora crassa.</title>
        <authorList>
            <person name="Galagan J.E."/>
            <person name="Calvo S.E."/>
            <person name="Borkovich K.A."/>
            <person name="Selker E.U."/>
            <person name="Read N.D."/>
            <person name="Jaffe D.B."/>
            <person name="FitzHugh W."/>
            <person name="Ma L.-J."/>
            <person name="Smirnov S."/>
            <person name="Purcell S."/>
            <person name="Rehman B."/>
            <person name="Elkins T."/>
            <person name="Engels R."/>
            <person name="Wang S."/>
            <person name="Nielsen C.B."/>
            <person name="Butler J."/>
            <person name="Endrizzi M."/>
            <person name="Qui D."/>
            <person name="Ianakiev P."/>
            <person name="Bell-Pedersen D."/>
            <person name="Nelson M.A."/>
            <person name="Werner-Washburne M."/>
            <person name="Selitrennikoff C.P."/>
            <person name="Kinsey J.A."/>
            <person name="Braun E.L."/>
            <person name="Zelter A."/>
            <person name="Schulte U."/>
            <person name="Kothe G.O."/>
            <person name="Jedd G."/>
            <person name="Mewes H.-W."/>
            <person name="Staben C."/>
            <person name="Marcotte E."/>
            <person name="Greenberg D."/>
            <person name="Roy A."/>
            <person name="Foley K."/>
            <person name="Naylor J."/>
            <person name="Stange-Thomann N."/>
            <person name="Barrett R."/>
            <person name="Gnerre S."/>
            <person name="Kamal M."/>
            <person name="Kamvysselis M."/>
            <person name="Mauceli E.W."/>
            <person name="Bielke C."/>
            <person name="Rudd S."/>
            <person name="Frishman D."/>
            <person name="Krystofova S."/>
            <person name="Rasmussen C."/>
            <person name="Metzenberg R.L."/>
            <person name="Perkins D.D."/>
            <person name="Kroken S."/>
            <person name="Cogoni C."/>
            <person name="Macino G."/>
            <person name="Catcheside D.E.A."/>
            <person name="Li W."/>
            <person name="Pratt R.J."/>
            <person name="Osmani S.A."/>
            <person name="DeSouza C.P.C."/>
            <person name="Glass N.L."/>
            <person name="Orbach M.J."/>
            <person name="Berglund J.A."/>
            <person name="Voelker R."/>
            <person name="Yarden O."/>
            <person name="Plamann M."/>
            <person name="Seiler S."/>
            <person name="Dunlap J.C."/>
            <person name="Radford A."/>
            <person name="Aramayo R."/>
            <person name="Natvig D.O."/>
            <person name="Alex L.A."/>
            <person name="Mannhaupt G."/>
            <person name="Ebbole D.J."/>
            <person name="Freitag M."/>
            <person name="Paulsen I."/>
            <person name="Sachs M.S."/>
            <person name="Lander E.S."/>
            <person name="Nusbaum C."/>
            <person name="Birren B.W."/>
        </authorList>
    </citation>
    <scope>NUCLEOTIDE SEQUENCE [LARGE SCALE GENOMIC DNA]</scope>
    <source>
        <strain>ATCC 24698 / 74-OR23-1A / CBS 708.71 / DSM 1257 / FGSC 987</strain>
    </source>
</reference>
<comment type="function">
    <text evidence="1">Pre-mRNA polyadenylation factor that directly interacts with poly(A) polymerase.</text>
</comment>
<comment type="subcellular location">
    <subcellularLocation>
        <location evidence="1">Nucleus</location>
    </subcellularLocation>
</comment>
<comment type="similarity">
    <text evidence="3">Belongs to the FIP1 family.</text>
</comment>
<gene>
    <name type="primary">fip-1</name>
    <name type="ORF">NCU07654</name>
</gene>
<feature type="chain" id="PRO_0000238515" description="Pre-mRNA polyadenylation factor fip-1">
    <location>
        <begin position="1"/>
        <end position="423"/>
    </location>
</feature>
<feature type="region of interest" description="Disordered" evidence="2">
    <location>
        <begin position="1"/>
        <end position="178"/>
    </location>
</feature>
<feature type="region of interest" description="Disordered" evidence="2">
    <location>
        <begin position="278"/>
        <end position="307"/>
    </location>
</feature>
<feature type="region of interest" description="Disordered" evidence="2">
    <location>
        <begin position="360"/>
        <end position="423"/>
    </location>
</feature>
<feature type="compositionally biased region" description="Acidic residues" evidence="2">
    <location>
        <begin position="1"/>
        <end position="11"/>
    </location>
</feature>
<feature type="compositionally biased region" description="Low complexity" evidence="2">
    <location>
        <begin position="19"/>
        <end position="61"/>
    </location>
</feature>
<feature type="compositionally biased region" description="Acidic residues" evidence="2">
    <location>
        <begin position="65"/>
        <end position="90"/>
    </location>
</feature>
<feature type="compositionally biased region" description="Low complexity" evidence="2">
    <location>
        <begin position="135"/>
        <end position="146"/>
    </location>
</feature>
<feature type="compositionally biased region" description="Gly residues" evidence="2">
    <location>
        <begin position="360"/>
        <end position="415"/>
    </location>
</feature>
<sequence>MDIDEDEDFYAPDEPQAAPPTTAATTTTPATTTTTAAPTTTTTTTSTTTASAPPTTTSSSTKPEDELEEGEEEDEGGGAMDEDDDSDIDIITERKDGSAPPPPVQSRYSEIRNIPQRAAANDNGVKTAPVKKSDGTNSNSNSSSNKFGGGGGIGNEQKTRQGSGAAGGSGAELPPVRTSKIEVDGIPVYKPVGKPITGVVIDEDLPENDKPWRKPGTDLSDYFNYGFDEFTWALYAQKQEALRGEYNAEAIAANNKKMMEEMTNMMMMGGMMPPGMGGPGGPGVGPAGPGAMGPGGPAGAGGMGGPGGGLDGMPPEMQAMMQQMMGAAAAQGMDPSQMGQMGMAGGPGDMGGMGGMFGGPGGGPGGPGTGGMGPGGPGGQGGQGQQFGGGFGGNQGQGGYGGYDQMGGAGGGGRGGRGRGRRW</sequence>